<feature type="chain" id="PRO_1000059977" description="Glutamate-1-semialdehyde 2,1-aminomutase">
    <location>
        <begin position="1"/>
        <end position="427"/>
    </location>
</feature>
<feature type="modified residue" description="N6-(pyridoxal phosphate)lysine" evidence="1">
    <location>
        <position position="265"/>
    </location>
</feature>
<accession>A2S9D9</accession>
<proteinExistence type="inferred from homology"/>
<gene>
    <name evidence="1" type="primary">hemL</name>
    <name type="ordered locus">BMA10229_A2601</name>
</gene>
<keyword id="KW-0963">Cytoplasm</keyword>
<keyword id="KW-0413">Isomerase</keyword>
<keyword id="KW-0627">Porphyrin biosynthesis</keyword>
<keyword id="KW-0663">Pyridoxal phosphate</keyword>
<sequence>MSNNQTLFERAQRTIPGGVNSPVRAFRSVGGTPRFVARAQGAYFWDADGKRYIDYIGSWGPMIVGHVHPDVLAAVQRVLADGFSFGAPTEAEIEIAEEICKLVPSIEQVRMVSSGTEATMSALRLARGFTGRSRIVKFEGCYHGHADSLLVKAGSGLLTFGNPTSAGVPADVAKHTTVLEYNNVAALEEAFAAFGGEIAAVIVEPVAGNMNLVRGTPEFLNALRALTAKHGAVLIFDEVMCGFRVALGGAQQHYGITPDLTCLGKVIGGGMPAAAFGGRGDIMSHLAPLGDVYQAGTLSGNPVAVAAGLATLRLIQAPGFHDALADKTRRLADGLAAEARAAGVPFSADAIGGMFGLYFTEQVPASFADVTKSDIERFNRFFHLMLDAGVYFAPSAYEAGFVSSAHDDATLDATLDAARRAFAALRA</sequence>
<dbReference type="EC" id="5.4.3.8" evidence="1"/>
<dbReference type="EMBL" id="CP000546">
    <property type="protein sequence ID" value="ABN01319.1"/>
    <property type="molecule type" value="Genomic_DNA"/>
</dbReference>
<dbReference type="SMR" id="A2S9D9"/>
<dbReference type="KEGG" id="bml:BMA10229_A2601"/>
<dbReference type="HOGENOM" id="CLU_016922_1_5_4"/>
<dbReference type="UniPathway" id="UPA00251">
    <property type="reaction ID" value="UER00317"/>
</dbReference>
<dbReference type="Proteomes" id="UP000002283">
    <property type="component" value="Chromosome I"/>
</dbReference>
<dbReference type="GO" id="GO:0005737">
    <property type="term" value="C:cytoplasm"/>
    <property type="evidence" value="ECO:0007669"/>
    <property type="project" value="UniProtKB-SubCell"/>
</dbReference>
<dbReference type="GO" id="GO:0042286">
    <property type="term" value="F:glutamate-1-semialdehyde 2,1-aminomutase activity"/>
    <property type="evidence" value="ECO:0007669"/>
    <property type="project" value="UniProtKB-UniRule"/>
</dbReference>
<dbReference type="GO" id="GO:0030170">
    <property type="term" value="F:pyridoxal phosphate binding"/>
    <property type="evidence" value="ECO:0007669"/>
    <property type="project" value="InterPro"/>
</dbReference>
<dbReference type="GO" id="GO:0008483">
    <property type="term" value="F:transaminase activity"/>
    <property type="evidence" value="ECO:0007669"/>
    <property type="project" value="InterPro"/>
</dbReference>
<dbReference type="GO" id="GO:0006782">
    <property type="term" value="P:protoporphyrinogen IX biosynthetic process"/>
    <property type="evidence" value="ECO:0007669"/>
    <property type="project" value="UniProtKB-UniRule"/>
</dbReference>
<dbReference type="CDD" id="cd00610">
    <property type="entry name" value="OAT_like"/>
    <property type="match status" value="1"/>
</dbReference>
<dbReference type="FunFam" id="3.40.640.10:FF:000021">
    <property type="entry name" value="Glutamate-1-semialdehyde 2,1-aminomutase"/>
    <property type="match status" value="1"/>
</dbReference>
<dbReference type="Gene3D" id="3.90.1150.10">
    <property type="entry name" value="Aspartate Aminotransferase, domain 1"/>
    <property type="match status" value="1"/>
</dbReference>
<dbReference type="Gene3D" id="3.40.640.10">
    <property type="entry name" value="Type I PLP-dependent aspartate aminotransferase-like (Major domain)"/>
    <property type="match status" value="1"/>
</dbReference>
<dbReference type="HAMAP" id="MF_00375">
    <property type="entry name" value="HemL_aminotrans_3"/>
    <property type="match status" value="1"/>
</dbReference>
<dbReference type="InterPro" id="IPR004639">
    <property type="entry name" value="4pyrrol_synth_GluAld_NH2Trfase"/>
</dbReference>
<dbReference type="InterPro" id="IPR005814">
    <property type="entry name" value="Aminotrans_3"/>
</dbReference>
<dbReference type="InterPro" id="IPR049704">
    <property type="entry name" value="Aminotrans_3_PPA_site"/>
</dbReference>
<dbReference type="InterPro" id="IPR015424">
    <property type="entry name" value="PyrdxlP-dep_Trfase"/>
</dbReference>
<dbReference type="InterPro" id="IPR015421">
    <property type="entry name" value="PyrdxlP-dep_Trfase_major"/>
</dbReference>
<dbReference type="InterPro" id="IPR015422">
    <property type="entry name" value="PyrdxlP-dep_Trfase_small"/>
</dbReference>
<dbReference type="NCBIfam" id="TIGR00713">
    <property type="entry name" value="hemL"/>
    <property type="match status" value="1"/>
</dbReference>
<dbReference type="NCBIfam" id="NF000818">
    <property type="entry name" value="PRK00062.1"/>
    <property type="match status" value="1"/>
</dbReference>
<dbReference type="PANTHER" id="PTHR43713">
    <property type="entry name" value="GLUTAMATE-1-SEMIALDEHYDE 2,1-AMINOMUTASE"/>
    <property type="match status" value="1"/>
</dbReference>
<dbReference type="PANTHER" id="PTHR43713:SF3">
    <property type="entry name" value="GLUTAMATE-1-SEMIALDEHYDE 2,1-AMINOMUTASE 1, CHLOROPLASTIC-RELATED"/>
    <property type="match status" value="1"/>
</dbReference>
<dbReference type="Pfam" id="PF00202">
    <property type="entry name" value="Aminotran_3"/>
    <property type="match status" value="1"/>
</dbReference>
<dbReference type="SUPFAM" id="SSF53383">
    <property type="entry name" value="PLP-dependent transferases"/>
    <property type="match status" value="1"/>
</dbReference>
<dbReference type="PROSITE" id="PS00600">
    <property type="entry name" value="AA_TRANSFER_CLASS_3"/>
    <property type="match status" value="1"/>
</dbReference>
<organism>
    <name type="scientific">Burkholderia mallei (strain NCTC 10229)</name>
    <dbReference type="NCBI Taxonomy" id="412022"/>
    <lineage>
        <taxon>Bacteria</taxon>
        <taxon>Pseudomonadati</taxon>
        <taxon>Pseudomonadota</taxon>
        <taxon>Betaproteobacteria</taxon>
        <taxon>Burkholderiales</taxon>
        <taxon>Burkholderiaceae</taxon>
        <taxon>Burkholderia</taxon>
        <taxon>pseudomallei group</taxon>
    </lineage>
</organism>
<comment type="catalytic activity">
    <reaction evidence="1">
        <text>(S)-4-amino-5-oxopentanoate = 5-aminolevulinate</text>
        <dbReference type="Rhea" id="RHEA:14265"/>
        <dbReference type="ChEBI" id="CHEBI:57501"/>
        <dbReference type="ChEBI" id="CHEBI:356416"/>
        <dbReference type="EC" id="5.4.3.8"/>
    </reaction>
</comment>
<comment type="cofactor">
    <cofactor evidence="1">
        <name>pyridoxal 5'-phosphate</name>
        <dbReference type="ChEBI" id="CHEBI:597326"/>
    </cofactor>
</comment>
<comment type="pathway">
    <text evidence="1">Porphyrin-containing compound metabolism; protoporphyrin-IX biosynthesis; 5-aminolevulinate from L-glutamyl-tRNA(Glu): step 2/2.</text>
</comment>
<comment type="subunit">
    <text evidence="1">Homodimer.</text>
</comment>
<comment type="subcellular location">
    <subcellularLocation>
        <location evidence="1">Cytoplasm</location>
    </subcellularLocation>
</comment>
<comment type="similarity">
    <text evidence="1">Belongs to the class-III pyridoxal-phosphate-dependent aminotransferase family. HemL subfamily.</text>
</comment>
<evidence type="ECO:0000255" key="1">
    <source>
        <dbReference type="HAMAP-Rule" id="MF_00375"/>
    </source>
</evidence>
<protein>
    <recommendedName>
        <fullName evidence="1">Glutamate-1-semialdehyde 2,1-aminomutase</fullName>
        <shortName evidence="1">GSA</shortName>
        <ecNumber evidence="1">5.4.3.8</ecNumber>
    </recommendedName>
    <alternativeName>
        <fullName evidence="1">Glutamate-1-semialdehyde aminotransferase</fullName>
        <shortName evidence="1">GSA-AT</shortName>
    </alternativeName>
</protein>
<name>GSA_BURM9</name>
<reference key="1">
    <citation type="journal article" date="2010" name="Genome Biol. Evol.">
        <title>Continuing evolution of Burkholderia mallei through genome reduction and large-scale rearrangements.</title>
        <authorList>
            <person name="Losada L."/>
            <person name="Ronning C.M."/>
            <person name="DeShazer D."/>
            <person name="Woods D."/>
            <person name="Fedorova N."/>
            <person name="Kim H.S."/>
            <person name="Shabalina S.A."/>
            <person name="Pearson T.R."/>
            <person name="Brinkac L."/>
            <person name="Tan P."/>
            <person name="Nandi T."/>
            <person name="Crabtree J."/>
            <person name="Badger J."/>
            <person name="Beckstrom-Sternberg S."/>
            <person name="Saqib M."/>
            <person name="Schutzer S.E."/>
            <person name="Keim P."/>
            <person name="Nierman W.C."/>
        </authorList>
    </citation>
    <scope>NUCLEOTIDE SEQUENCE [LARGE SCALE GENOMIC DNA]</scope>
    <source>
        <strain>NCTC 10229</strain>
    </source>
</reference>